<keyword id="KW-0143">Chaperone</keyword>
<keyword id="KW-0963">Cytoplasm</keyword>
<keyword id="KW-0996">Nickel insertion</keyword>
<keyword id="KW-1185">Reference proteome</keyword>
<gene>
    <name evidence="1" type="primary">ureF</name>
    <name type="ordered locus">TERTU_4204</name>
</gene>
<reference key="1">
    <citation type="journal article" date="2009" name="PLoS ONE">
        <title>The complete genome of Teredinibacter turnerae T7901: an intracellular endosymbiont of marine wood-boring bivalves (shipworms).</title>
        <authorList>
            <person name="Yang J.C."/>
            <person name="Madupu R."/>
            <person name="Durkin A.S."/>
            <person name="Ekborg N.A."/>
            <person name="Pedamallu C.S."/>
            <person name="Hostetler J.B."/>
            <person name="Radune D."/>
            <person name="Toms B.S."/>
            <person name="Henrissat B."/>
            <person name="Coutinho P.M."/>
            <person name="Schwarz S."/>
            <person name="Field L."/>
            <person name="Trindade-Silva A.E."/>
            <person name="Soares C.A.G."/>
            <person name="Elshahawi S."/>
            <person name="Hanora A."/>
            <person name="Schmidt E.W."/>
            <person name="Haygood M.G."/>
            <person name="Posfai J."/>
            <person name="Benner J."/>
            <person name="Madinger C."/>
            <person name="Nove J."/>
            <person name="Anton B."/>
            <person name="Chaudhary K."/>
            <person name="Foster J."/>
            <person name="Holman A."/>
            <person name="Kumar S."/>
            <person name="Lessard P.A."/>
            <person name="Luyten Y.A."/>
            <person name="Slatko B."/>
            <person name="Wood N."/>
            <person name="Wu B."/>
            <person name="Teplitski M."/>
            <person name="Mougous J.D."/>
            <person name="Ward N."/>
            <person name="Eisen J.A."/>
            <person name="Badger J.H."/>
            <person name="Distel D.L."/>
        </authorList>
    </citation>
    <scope>NUCLEOTIDE SEQUENCE [LARGE SCALE GENOMIC DNA]</scope>
    <source>
        <strain>ATCC 39867 / T7901</strain>
    </source>
</reference>
<comment type="function">
    <text evidence="1">Required for maturation of urease via the functional incorporation of the urease nickel metallocenter.</text>
</comment>
<comment type="subunit">
    <text evidence="1">UreD, UreF and UreG form a complex that acts as a GTP-hydrolysis-dependent molecular chaperone, activating the urease apoprotein by helping to assemble the nickel containing metallocenter of UreC. The UreE protein probably delivers the nickel.</text>
</comment>
<comment type="subcellular location">
    <subcellularLocation>
        <location evidence="1">Cytoplasm</location>
    </subcellularLocation>
</comment>
<comment type="similarity">
    <text evidence="1">Belongs to the UreF family.</text>
</comment>
<dbReference type="EMBL" id="CP001614">
    <property type="protein sequence ID" value="ACR10756.1"/>
    <property type="molecule type" value="Genomic_DNA"/>
</dbReference>
<dbReference type="RefSeq" id="WP_015816868.1">
    <property type="nucleotide sequence ID" value="NC_012997.1"/>
</dbReference>
<dbReference type="SMR" id="C5BUN7"/>
<dbReference type="STRING" id="377629.TERTU_4204"/>
<dbReference type="KEGG" id="ttu:TERTU_4204"/>
<dbReference type="eggNOG" id="COG0830">
    <property type="taxonomic scope" value="Bacteria"/>
</dbReference>
<dbReference type="HOGENOM" id="CLU_049215_2_1_6"/>
<dbReference type="OrthoDB" id="9798772at2"/>
<dbReference type="Proteomes" id="UP000009080">
    <property type="component" value="Chromosome"/>
</dbReference>
<dbReference type="GO" id="GO:0005737">
    <property type="term" value="C:cytoplasm"/>
    <property type="evidence" value="ECO:0007669"/>
    <property type="project" value="UniProtKB-SubCell"/>
</dbReference>
<dbReference type="GO" id="GO:0016151">
    <property type="term" value="F:nickel cation binding"/>
    <property type="evidence" value="ECO:0007669"/>
    <property type="project" value="UniProtKB-UniRule"/>
</dbReference>
<dbReference type="Gene3D" id="1.10.4190.10">
    <property type="entry name" value="Urease accessory protein UreF"/>
    <property type="match status" value="1"/>
</dbReference>
<dbReference type="HAMAP" id="MF_01385">
    <property type="entry name" value="UreF"/>
    <property type="match status" value="1"/>
</dbReference>
<dbReference type="InterPro" id="IPR002639">
    <property type="entry name" value="UreF"/>
</dbReference>
<dbReference type="InterPro" id="IPR038277">
    <property type="entry name" value="UreF_sf"/>
</dbReference>
<dbReference type="PANTHER" id="PTHR33620">
    <property type="entry name" value="UREASE ACCESSORY PROTEIN F"/>
    <property type="match status" value="1"/>
</dbReference>
<dbReference type="PANTHER" id="PTHR33620:SF1">
    <property type="entry name" value="UREASE ACCESSORY PROTEIN F"/>
    <property type="match status" value="1"/>
</dbReference>
<dbReference type="Pfam" id="PF01730">
    <property type="entry name" value="UreF"/>
    <property type="match status" value="1"/>
</dbReference>
<dbReference type="PIRSF" id="PIRSF009467">
    <property type="entry name" value="Ureas_acces_UreF"/>
    <property type="match status" value="1"/>
</dbReference>
<evidence type="ECO:0000255" key="1">
    <source>
        <dbReference type="HAMAP-Rule" id="MF_01385"/>
    </source>
</evidence>
<accession>C5BUN7</accession>
<protein>
    <recommendedName>
        <fullName evidence="1">Urease accessory protein UreF</fullName>
    </recommendedName>
</protein>
<proteinExistence type="inferred from homology"/>
<sequence>MNNQLLHLMHLVSPALPVGAYAYSQGLEYAVDSGWLAEPGKLQQWITGVLEHSVGHLDLPVLLRLYRAWDAAALDEVDRWNDFVRANRETAELLLEDEQLGLALQRLSVSLQTKGADTPLSSPPCFVTQFALAGVRRHIAEEDLLYGFAWSWLENQVAAATKIVPLGQTQAQQTLVAMMEKIPAVCAHALRLQDEELGVGLPALAMASSRHERQYSRLFRS</sequence>
<feature type="chain" id="PRO_1000215129" description="Urease accessory protein UreF">
    <location>
        <begin position="1"/>
        <end position="221"/>
    </location>
</feature>
<name>UREF_TERTT</name>
<organism>
    <name type="scientific">Teredinibacter turnerae (strain ATCC 39867 / T7901)</name>
    <dbReference type="NCBI Taxonomy" id="377629"/>
    <lineage>
        <taxon>Bacteria</taxon>
        <taxon>Pseudomonadati</taxon>
        <taxon>Pseudomonadota</taxon>
        <taxon>Gammaproteobacteria</taxon>
        <taxon>Cellvibrionales</taxon>
        <taxon>Cellvibrionaceae</taxon>
        <taxon>Teredinibacter</taxon>
    </lineage>
</organism>